<reference key="1">
    <citation type="journal article" date="2008" name="Chem. Biol. Interact.">
        <title>Extending the Bacillus cereus group genomics to putative food-borne pathogens of different toxicity.</title>
        <authorList>
            <person name="Lapidus A."/>
            <person name="Goltsman E."/>
            <person name="Auger S."/>
            <person name="Galleron N."/>
            <person name="Segurens B."/>
            <person name="Dossat C."/>
            <person name="Land M.L."/>
            <person name="Broussolle V."/>
            <person name="Brillard J."/>
            <person name="Guinebretiere M.-H."/>
            <person name="Sanchis V."/>
            <person name="Nguen-the C."/>
            <person name="Lereclus D."/>
            <person name="Richardson P."/>
            <person name="Wincker P."/>
            <person name="Weissenbach J."/>
            <person name="Ehrlich S.D."/>
            <person name="Sorokin A."/>
        </authorList>
    </citation>
    <scope>NUCLEOTIDE SEQUENCE [LARGE SCALE GENOMIC DNA]</scope>
    <source>
        <strain>DSM 22905 / CIP 110041 / 391-98 / NVH 391-98</strain>
    </source>
</reference>
<accession>A7GVM2</accession>
<evidence type="ECO:0000255" key="1">
    <source>
        <dbReference type="HAMAP-Rule" id="MF_00658"/>
    </source>
</evidence>
<organism>
    <name type="scientific">Bacillus cytotoxicus (strain DSM 22905 / CIP 110041 / 391-98 / NVH 391-98)</name>
    <dbReference type="NCBI Taxonomy" id="315749"/>
    <lineage>
        <taxon>Bacteria</taxon>
        <taxon>Bacillati</taxon>
        <taxon>Bacillota</taxon>
        <taxon>Bacilli</taxon>
        <taxon>Bacillales</taxon>
        <taxon>Bacillaceae</taxon>
        <taxon>Bacillus</taxon>
        <taxon>Bacillus cereus group</taxon>
    </lineage>
</organism>
<sequence>MNISIISIGKLKEKYLKQGIAEYLKRLSSYAKVEVIELPDEKAPENLSEAEMLIVKEKEGVRILDKISDDTHVIALAIEGKQKSSEQFAESLDCLATYGKSKIAFVIGGSLGLSTEVMKRSNESLSFSKMTLPHQLMRLVLLEQIYRAFRINRGEPYHK</sequence>
<dbReference type="EC" id="2.1.1.177" evidence="1"/>
<dbReference type="EMBL" id="CP000764">
    <property type="protein sequence ID" value="ABS24180.1"/>
    <property type="molecule type" value="Genomic_DNA"/>
</dbReference>
<dbReference type="SMR" id="A7GVM2"/>
<dbReference type="STRING" id="315749.Bcer98_3999"/>
<dbReference type="KEGG" id="bcy:Bcer98_3999"/>
<dbReference type="eggNOG" id="COG1576">
    <property type="taxonomic scope" value="Bacteria"/>
</dbReference>
<dbReference type="HOGENOM" id="CLU_100552_0_0_9"/>
<dbReference type="OrthoDB" id="9806643at2"/>
<dbReference type="Proteomes" id="UP000002300">
    <property type="component" value="Chromosome"/>
</dbReference>
<dbReference type="GO" id="GO:0005737">
    <property type="term" value="C:cytoplasm"/>
    <property type="evidence" value="ECO:0007669"/>
    <property type="project" value="UniProtKB-SubCell"/>
</dbReference>
<dbReference type="GO" id="GO:0070038">
    <property type="term" value="F:rRNA (pseudouridine-N3-)-methyltransferase activity"/>
    <property type="evidence" value="ECO:0007669"/>
    <property type="project" value="UniProtKB-UniRule"/>
</dbReference>
<dbReference type="CDD" id="cd18081">
    <property type="entry name" value="RlmH-like"/>
    <property type="match status" value="1"/>
</dbReference>
<dbReference type="Gene3D" id="3.40.1280.10">
    <property type="match status" value="1"/>
</dbReference>
<dbReference type="HAMAP" id="MF_00658">
    <property type="entry name" value="23SrRNA_methyltr_H"/>
    <property type="match status" value="1"/>
</dbReference>
<dbReference type="InterPro" id="IPR029028">
    <property type="entry name" value="Alpha/beta_knot_MTases"/>
</dbReference>
<dbReference type="InterPro" id="IPR003742">
    <property type="entry name" value="RlmH-like"/>
</dbReference>
<dbReference type="InterPro" id="IPR029026">
    <property type="entry name" value="tRNA_m1G_MTases_N"/>
</dbReference>
<dbReference type="NCBIfam" id="NF000985">
    <property type="entry name" value="PRK00103.1-3"/>
    <property type="match status" value="1"/>
</dbReference>
<dbReference type="NCBIfam" id="TIGR00246">
    <property type="entry name" value="tRNA_RlmH_YbeA"/>
    <property type="match status" value="1"/>
</dbReference>
<dbReference type="PANTHER" id="PTHR33603">
    <property type="entry name" value="METHYLTRANSFERASE"/>
    <property type="match status" value="1"/>
</dbReference>
<dbReference type="PANTHER" id="PTHR33603:SF1">
    <property type="entry name" value="RIBOSOMAL RNA LARGE SUBUNIT METHYLTRANSFERASE H"/>
    <property type="match status" value="1"/>
</dbReference>
<dbReference type="Pfam" id="PF02590">
    <property type="entry name" value="SPOUT_MTase"/>
    <property type="match status" value="1"/>
</dbReference>
<dbReference type="PIRSF" id="PIRSF004505">
    <property type="entry name" value="MT_bac"/>
    <property type="match status" value="1"/>
</dbReference>
<dbReference type="SUPFAM" id="SSF75217">
    <property type="entry name" value="alpha/beta knot"/>
    <property type="match status" value="1"/>
</dbReference>
<gene>
    <name evidence="1" type="primary">rlmH</name>
    <name type="ordered locus">Bcer98_3999</name>
</gene>
<proteinExistence type="inferred from homology"/>
<protein>
    <recommendedName>
        <fullName evidence="1">Ribosomal RNA large subunit methyltransferase H</fullName>
        <ecNumber evidence="1">2.1.1.177</ecNumber>
    </recommendedName>
    <alternativeName>
        <fullName evidence="1">23S rRNA (pseudouridine1915-N3)-methyltransferase</fullName>
    </alternativeName>
    <alternativeName>
        <fullName evidence="1">23S rRNA m3Psi1915 methyltransferase</fullName>
    </alternativeName>
    <alternativeName>
        <fullName evidence="1">rRNA (pseudouridine-N3-)-methyltransferase RlmH</fullName>
    </alternativeName>
</protein>
<name>RLMH_BACCN</name>
<keyword id="KW-0963">Cytoplasm</keyword>
<keyword id="KW-0489">Methyltransferase</keyword>
<keyword id="KW-0698">rRNA processing</keyword>
<keyword id="KW-0949">S-adenosyl-L-methionine</keyword>
<keyword id="KW-0808">Transferase</keyword>
<feature type="chain" id="PRO_1000082794" description="Ribosomal RNA large subunit methyltransferase H">
    <location>
        <begin position="1"/>
        <end position="159"/>
    </location>
</feature>
<feature type="binding site" evidence="1">
    <location>
        <position position="76"/>
    </location>
    <ligand>
        <name>S-adenosyl-L-methionine</name>
        <dbReference type="ChEBI" id="CHEBI:59789"/>
    </ligand>
</feature>
<feature type="binding site" evidence="1">
    <location>
        <position position="108"/>
    </location>
    <ligand>
        <name>S-adenosyl-L-methionine</name>
        <dbReference type="ChEBI" id="CHEBI:59789"/>
    </ligand>
</feature>
<feature type="binding site" evidence="1">
    <location>
        <begin position="127"/>
        <end position="132"/>
    </location>
    <ligand>
        <name>S-adenosyl-L-methionine</name>
        <dbReference type="ChEBI" id="CHEBI:59789"/>
    </ligand>
</feature>
<comment type="function">
    <text evidence="1">Specifically methylates the pseudouridine at position 1915 (m3Psi1915) in 23S rRNA.</text>
</comment>
<comment type="catalytic activity">
    <reaction evidence="1">
        <text>pseudouridine(1915) in 23S rRNA + S-adenosyl-L-methionine = N(3)-methylpseudouridine(1915) in 23S rRNA + S-adenosyl-L-homocysteine + H(+)</text>
        <dbReference type="Rhea" id="RHEA:42752"/>
        <dbReference type="Rhea" id="RHEA-COMP:10221"/>
        <dbReference type="Rhea" id="RHEA-COMP:10222"/>
        <dbReference type="ChEBI" id="CHEBI:15378"/>
        <dbReference type="ChEBI" id="CHEBI:57856"/>
        <dbReference type="ChEBI" id="CHEBI:59789"/>
        <dbReference type="ChEBI" id="CHEBI:65314"/>
        <dbReference type="ChEBI" id="CHEBI:74486"/>
        <dbReference type="EC" id="2.1.1.177"/>
    </reaction>
</comment>
<comment type="subunit">
    <text evidence="1">Homodimer.</text>
</comment>
<comment type="subcellular location">
    <subcellularLocation>
        <location evidence="1">Cytoplasm</location>
    </subcellularLocation>
</comment>
<comment type="similarity">
    <text evidence="1">Belongs to the RNA methyltransferase RlmH family.</text>
</comment>